<accession>Q3IMX3</accession>
<gene>
    <name evidence="1" type="primary">rps8</name>
    <name type="ordered locus">NP_4884A</name>
</gene>
<reference key="1">
    <citation type="journal article" date="2005" name="Genome Res.">
        <title>Living with two extremes: conclusions from the genome sequence of Natronomonas pharaonis.</title>
        <authorList>
            <person name="Falb M."/>
            <person name="Pfeiffer F."/>
            <person name="Palm P."/>
            <person name="Rodewald K."/>
            <person name="Hickmann V."/>
            <person name="Tittor J."/>
            <person name="Oesterhelt D."/>
        </authorList>
    </citation>
    <scope>NUCLEOTIDE SEQUENCE [LARGE SCALE GENOMIC DNA]</scope>
    <source>
        <strain>ATCC 35678 / DSM 2160 / CIP 103997 / JCM 8858 / NBRC 14720 / NCIMB 2260 / Gabara</strain>
    </source>
</reference>
<sequence>MADNDPLASALSGLDNAESVGHLEQTIQPASNEIGSVLEVFYDRGYVDGFQFVDDGKAGRFEVELKGAINECGAVKPRYSAGADEFEKWEKRFLPARDYGTLIVTTSHGVMSHYEAREQGIGGQVIAYVY</sequence>
<keyword id="KW-1185">Reference proteome</keyword>
<keyword id="KW-0687">Ribonucleoprotein</keyword>
<keyword id="KW-0689">Ribosomal protein</keyword>
<keyword id="KW-0694">RNA-binding</keyword>
<keyword id="KW-0699">rRNA-binding</keyword>
<evidence type="ECO:0000255" key="1">
    <source>
        <dbReference type="HAMAP-Rule" id="MF_01302"/>
    </source>
</evidence>
<evidence type="ECO:0000305" key="2"/>
<feature type="chain" id="PRO_0000225903" description="Small ribosomal subunit protein uS8">
    <location>
        <begin position="1"/>
        <end position="130"/>
    </location>
</feature>
<comment type="function">
    <text evidence="1">One of the primary rRNA binding proteins, it binds directly to 16S rRNA central domain where it helps coordinate assembly of the platform of the 30S subunit.</text>
</comment>
<comment type="subunit">
    <text evidence="1">Part of the 30S ribosomal subunit.</text>
</comment>
<comment type="similarity">
    <text evidence="1">Belongs to the universal ribosomal protein uS8 family.</text>
</comment>
<proteinExistence type="inferred from homology"/>
<dbReference type="EMBL" id="CR936257">
    <property type="protein sequence ID" value="CAI50533.1"/>
    <property type="molecule type" value="Genomic_DNA"/>
</dbReference>
<dbReference type="RefSeq" id="WP_011324145.1">
    <property type="nucleotide sequence ID" value="NC_007426.1"/>
</dbReference>
<dbReference type="SMR" id="Q3IMX3"/>
<dbReference type="STRING" id="348780.NP_4884A"/>
<dbReference type="EnsemblBacteria" id="CAI50533">
    <property type="protein sequence ID" value="CAI50533"/>
    <property type="gene ID" value="NP_4884A"/>
</dbReference>
<dbReference type="GeneID" id="3703187"/>
<dbReference type="KEGG" id="nph:NP_4884A"/>
<dbReference type="eggNOG" id="arCOG04091">
    <property type="taxonomic scope" value="Archaea"/>
</dbReference>
<dbReference type="HOGENOM" id="CLU_098428_1_1_2"/>
<dbReference type="OrthoDB" id="5670at2157"/>
<dbReference type="Proteomes" id="UP000002698">
    <property type="component" value="Chromosome"/>
</dbReference>
<dbReference type="GO" id="GO:1990904">
    <property type="term" value="C:ribonucleoprotein complex"/>
    <property type="evidence" value="ECO:0007669"/>
    <property type="project" value="UniProtKB-KW"/>
</dbReference>
<dbReference type="GO" id="GO:0005840">
    <property type="term" value="C:ribosome"/>
    <property type="evidence" value="ECO:0007669"/>
    <property type="project" value="UniProtKB-KW"/>
</dbReference>
<dbReference type="GO" id="GO:0019843">
    <property type="term" value="F:rRNA binding"/>
    <property type="evidence" value="ECO:0007669"/>
    <property type="project" value="UniProtKB-UniRule"/>
</dbReference>
<dbReference type="GO" id="GO:0003735">
    <property type="term" value="F:structural constituent of ribosome"/>
    <property type="evidence" value="ECO:0007669"/>
    <property type="project" value="InterPro"/>
</dbReference>
<dbReference type="GO" id="GO:0006412">
    <property type="term" value="P:translation"/>
    <property type="evidence" value="ECO:0007669"/>
    <property type="project" value="UniProtKB-UniRule"/>
</dbReference>
<dbReference type="FunFam" id="3.30.1490.10:FF:000002">
    <property type="entry name" value="40S ribosomal protein S15a"/>
    <property type="match status" value="1"/>
</dbReference>
<dbReference type="Gene3D" id="3.30.1370.30">
    <property type="match status" value="1"/>
</dbReference>
<dbReference type="Gene3D" id="3.30.1490.10">
    <property type="match status" value="1"/>
</dbReference>
<dbReference type="HAMAP" id="MF_01302_A">
    <property type="entry name" value="Ribosomal_uS8_A"/>
    <property type="match status" value="1"/>
</dbReference>
<dbReference type="InterPro" id="IPR000630">
    <property type="entry name" value="Ribosomal_uS8"/>
</dbReference>
<dbReference type="InterPro" id="IPR047863">
    <property type="entry name" value="Ribosomal_uS8_CS"/>
</dbReference>
<dbReference type="InterPro" id="IPR035987">
    <property type="entry name" value="Ribosomal_uS8_sf"/>
</dbReference>
<dbReference type="NCBIfam" id="NF003115">
    <property type="entry name" value="PRK04034.1"/>
    <property type="match status" value="1"/>
</dbReference>
<dbReference type="PANTHER" id="PTHR11758">
    <property type="entry name" value="40S RIBOSOMAL PROTEIN S15A"/>
    <property type="match status" value="1"/>
</dbReference>
<dbReference type="Pfam" id="PF00410">
    <property type="entry name" value="Ribosomal_S8"/>
    <property type="match status" value="1"/>
</dbReference>
<dbReference type="SUPFAM" id="SSF56047">
    <property type="entry name" value="Ribosomal protein S8"/>
    <property type="match status" value="1"/>
</dbReference>
<dbReference type="PROSITE" id="PS00053">
    <property type="entry name" value="RIBOSOMAL_S8"/>
    <property type="match status" value="1"/>
</dbReference>
<protein>
    <recommendedName>
        <fullName evidence="1">Small ribosomal subunit protein uS8</fullName>
    </recommendedName>
    <alternativeName>
        <fullName evidence="2">30S ribosomal protein S8</fullName>
    </alternativeName>
</protein>
<name>RS8_NATPD</name>
<organism>
    <name type="scientific">Natronomonas pharaonis (strain ATCC 35678 / DSM 2160 / CIP 103997 / JCM 8858 / NBRC 14720 / NCIMB 2260 / Gabara)</name>
    <name type="common">Halobacterium pharaonis</name>
    <dbReference type="NCBI Taxonomy" id="348780"/>
    <lineage>
        <taxon>Archaea</taxon>
        <taxon>Methanobacteriati</taxon>
        <taxon>Methanobacteriota</taxon>
        <taxon>Stenosarchaea group</taxon>
        <taxon>Halobacteria</taxon>
        <taxon>Halobacteriales</taxon>
        <taxon>Haloarculaceae</taxon>
        <taxon>Natronomonas</taxon>
    </lineage>
</organism>